<sequence length="85" mass="9522">MIKLFCVLAAFISINSACQSSHQQREEFTVATYHSSSICTTYCYSNCVVASQHKGLNVESYTCDKPDPYGRETVCKCTLIKCHDI</sequence>
<name>009R_IIV6</name>
<protein>
    <recommendedName>
        <fullName>Uncharacterized protein 009R</fullName>
    </recommendedName>
</protein>
<proteinExistence type="inferred from homology"/>
<gene>
    <name type="ORF">IIV6-009R</name>
</gene>
<keyword id="KW-1185">Reference proteome</keyword>
<keyword id="KW-0732">Signal</keyword>
<feature type="signal peptide" evidence="1">
    <location>
        <begin position="1"/>
        <end position="20"/>
    </location>
</feature>
<feature type="chain" id="PRO_0000377959" description="Uncharacterized protein 009R">
    <location>
        <begin position="21"/>
        <end position="85"/>
    </location>
</feature>
<evidence type="ECO:0000255" key="1"/>
<accession>Q91G85</accession>
<organism>
    <name type="scientific">Invertebrate iridescent virus 6</name>
    <name type="common">IIV-6</name>
    <name type="synonym">Chilo iridescent virus</name>
    <dbReference type="NCBI Taxonomy" id="176652"/>
    <lineage>
        <taxon>Viruses</taxon>
        <taxon>Varidnaviria</taxon>
        <taxon>Bamfordvirae</taxon>
        <taxon>Nucleocytoviricota</taxon>
        <taxon>Megaviricetes</taxon>
        <taxon>Pimascovirales</taxon>
        <taxon>Iridoviridae</taxon>
        <taxon>Betairidovirinae</taxon>
        <taxon>Iridovirus</taxon>
    </lineage>
</organism>
<organismHost>
    <name type="scientific">Acheta domesticus</name>
    <name type="common">House cricket</name>
    <dbReference type="NCBI Taxonomy" id="6997"/>
</organismHost>
<organismHost>
    <name type="scientific">Chilo suppressalis</name>
    <name type="common">Asiatic rice borer moth</name>
    <dbReference type="NCBI Taxonomy" id="168631"/>
</organismHost>
<organismHost>
    <name type="scientific">Gryllus bimaculatus</name>
    <name type="common">Two-spotted cricket</name>
    <dbReference type="NCBI Taxonomy" id="6999"/>
</organismHost>
<organismHost>
    <name type="scientific">Gryllus campestris</name>
    <dbReference type="NCBI Taxonomy" id="58607"/>
</organismHost>
<organismHost>
    <name type="scientific">Spodoptera frugiperda</name>
    <name type="common">Fall armyworm</name>
    <dbReference type="NCBI Taxonomy" id="7108"/>
</organismHost>
<dbReference type="EMBL" id="AF303741">
    <property type="protein sequence ID" value="AAK81947.1"/>
    <property type="molecule type" value="Genomic_DNA"/>
</dbReference>
<dbReference type="RefSeq" id="NP_149472.1">
    <property type="nucleotide sequence ID" value="NC_003038.1"/>
</dbReference>
<dbReference type="KEGG" id="vg:1733381"/>
<dbReference type="OrthoDB" id="37229at10239"/>
<dbReference type="Proteomes" id="UP000001359">
    <property type="component" value="Genome"/>
</dbReference>
<reference key="1">
    <citation type="journal article" date="2001" name="Virology">
        <title>Analysis of the first complete DNA sequence of an invertebrate iridovirus: coding strategy of the genome of Chilo iridescent virus.</title>
        <authorList>
            <person name="Jakob N.J."/>
            <person name="Mueller K."/>
            <person name="Bahr U."/>
            <person name="Darai G."/>
        </authorList>
    </citation>
    <scope>NUCLEOTIDE SEQUENCE [LARGE SCALE GENOMIC DNA]</scope>
</reference>
<reference key="2">
    <citation type="journal article" date="2007" name="Virol. J.">
        <title>Comparative genomic analysis of the family Iridoviridae: re-annotating and defining the core set of iridovirus genes.</title>
        <authorList>
            <person name="Eaton H.E."/>
            <person name="Metcalf J."/>
            <person name="Penny E."/>
            <person name="Tcherepanov V."/>
            <person name="Upton C."/>
            <person name="Brunetti C.R."/>
        </authorList>
    </citation>
    <scope>GENOME REANNOTATION</scope>
</reference>